<dbReference type="EMBL" id="X17403">
    <property type="protein sequence ID" value="CAA35327.1"/>
    <property type="molecule type" value="Genomic_DNA"/>
</dbReference>
<dbReference type="PIR" id="S09892">
    <property type="entry name" value="S09892"/>
</dbReference>
<dbReference type="Proteomes" id="UP000008991">
    <property type="component" value="Segment"/>
</dbReference>
<reference key="1">
    <citation type="journal article" date="1990" name="Curr. Top. Microbiol. Immunol.">
        <title>Analysis of the protein-coding content of the sequence of human cytomegalovirus strain AD169.</title>
        <authorList>
            <person name="Chee M.S."/>
            <person name="Bankier A.T."/>
            <person name="Beck S."/>
            <person name="Bohni R."/>
            <person name="Brown C.M."/>
            <person name="Cerny R."/>
            <person name="Horsnell T."/>
            <person name="Hutchison C.A. III"/>
            <person name="Kouzarides T."/>
            <person name="Martignetti J.A."/>
            <person name="Preddie E."/>
            <person name="Satchwell S.C."/>
            <person name="Tomlinson P."/>
            <person name="Weston K.M."/>
            <person name="Barrell B.G."/>
        </authorList>
    </citation>
    <scope>NUCLEOTIDE SEQUENCE [LARGE SCALE GENOMIC DNA]</scope>
</reference>
<sequence>SITWLFATTLFIGYMPIHCPSETDTDSVFLQDGVSFIIYKFTYTTPPSPVPAVFIKHNVGSPRESRVRVPDMGSSPVAAELLHPSPAPMPPATHGRSAAPCS</sequence>
<organismHost>
    <name type="scientific">Homo sapiens</name>
    <name type="common">Human</name>
    <dbReference type="NCBI Taxonomy" id="9606"/>
</organismHost>
<evidence type="ECO:0000256" key="1">
    <source>
        <dbReference type="SAM" id="MobiDB-lite"/>
    </source>
</evidence>
<feature type="chain" id="PRO_0000115360" description="Uncharacterized protein UL125">
    <location>
        <begin position="1"/>
        <end position="102"/>
    </location>
</feature>
<feature type="region of interest" description="Disordered" evidence="1">
    <location>
        <begin position="79"/>
        <end position="102"/>
    </location>
</feature>
<protein>
    <recommendedName>
        <fullName>Uncharacterized protein UL125</fullName>
    </recommendedName>
</protein>
<proteinExistence type="predicted"/>
<accession>P16835</accession>
<name>UL125_HCMVA</name>
<gene>
    <name type="primary">UL125</name>
</gene>
<organism>
    <name type="scientific">Human cytomegalovirus (strain AD169)</name>
    <name type="common">HHV-5</name>
    <name type="synonym">Human herpesvirus 5</name>
    <dbReference type="NCBI Taxonomy" id="10360"/>
    <lineage>
        <taxon>Viruses</taxon>
        <taxon>Duplodnaviria</taxon>
        <taxon>Heunggongvirae</taxon>
        <taxon>Peploviricota</taxon>
        <taxon>Herviviricetes</taxon>
        <taxon>Herpesvirales</taxon>
        <taxon>Orthoherpesviridae</taxon>
        <taxon>Betaherpesvirinae</taxon>
        <taxon>Cytomegalovirus</taxon>
        <taxon>Cytomegalovirus humanbeta5</taxon>
        <taxon>Human cytomegalovirus</taxon>
    </lineage>
</organism>